<organism>
    <name type="scientific">Lactobacillus delbrueckii subsp. bulgaricus (strain ATCC BAA-365 / Lb-18)</name>
    <dbReference type="NCBI Taxonomy" id="321956"/>
    <lineage>
        <taxon>Bacteria</taxon>
        <taxon>Bacillati</taxon>
        <taxon>Bacillota</taxon>
        <taxon>Bacilli</taxon>
        <taxon>Lactobacillales</taxon>
        <taxon>Lactobacillaceae</taxon>
        <taxon>Lactobacillus</taxon>
    </lineage>
</organism>
<dbReference type="EC" id="3.1.-.-" evidence="1"/>
<dbReference type="EMBL" id="CP000412">
    <property type="protein sequence ID" value="ABJ58977.1"/>
    <property type="molecule type" value="Genomic_DNA"/>
</dbReference>
<dbReference type="RefSeq" id="WP_003619572.1">
    <property type="nucleotide sequence ID" value="NC_008529.1"/>
</dbReference>
<dbReference type="SMR" id="Q048Z5"/>
<dbReference type="KEGG" id="lbu:LBUL_1484"/>
<dbReference type="HOGENOM" id="CLU_098240_2_0_9"/>
<dbReference type="BioCyc" id="LDEL321956:LBUL_RS07010-MONOMER"/>
<dbReference type="GO" id="GO:0005829">
    <property type="term" value="C:cytosol"/>
    <property type="evidence" value="ECO:0007669"/>
    <property type="project" value="TreeGrafter"/>
</dbReference>
<dbReference type="GO" id="GO:0004518">
    <property type="term" value="F:nuclease activity"/>
    <property type="evidence" value="ECO:0007669"/>
    <property type="project" value="UniProtKB-KW"/>
</dbReference>
<dbReference type="GO" id="GO:0000967">
    <property type="term" value="P:rRNA 5'-end processing"/>
    <property type="evidence" value="ECO:0007669"/>
    <property type="project" value="UniProtKB-UniRule"/>
</dbReference>
<dbReference type="CDD" id="cd16964">
    <property type="entry name" value="YqgF"/>
    <property type="match status" value="1"/>
</dbReference>
<dbReference type="Gene3D" id="3.30.420.140">
    <property type="entry name" value="YqgF/RNase H-like domain"/>
    <property type="match status" value="1"/>
</dbReference>
<dbReference type="HAMAP" id="MF_00651">
    <property type="entry name" value="Nuclease_YqgF"/>
    <property type="match status" value="1"/>
</dbReference>
<dbReference type="InterPro" id="IPR012337">
    <property type="entry name" value="RNaseH-like_sf"/>
</dbReference>
<dbReference type="InterPro" id="IPR005227">
    <property type="entry name" value="YqgF"/>
</dbReference>
<dbReference type="InterPro" id="IPR006641">
    <property type="entry name" value="YqgF/RNaseH-like_dom"/>
</dbReference>
<dbReference type="InterPro" id="IPR037027">
    <property type="entry name" value="YqgF/RNaseH-like_dom_sf"/>
</dbReference>
<dbReference type="NCBIfam" id="TIGR00250">
    <property type="entry name" value="RNAse_H_YqgF"/>
    <property type="match status" value="1"/>
</dbReference>
<dbReference type="PANTHER" id="PTHR33317">
    <property type="entry name" value="POLYNUCLEOTIDYL TRANSFERASE, RIBONUCLEASE H-LIKE SUPERFAMILY PROTEIN"/>
    <property type="match status" value="1"/>
</dbReference>
<dbReference type="PANTHER" id="PTHR33317:SF4">
    <property type="entry name" value="POLYNUCLEOTIDYL TRANSFERASE, RIBONUCLEASE H-LIKE SUPERFAMILY PROTEIN"/>
    <property type="match status" value="1"/>
</dbReference>
<dbReference type="Pfam" id="PF03652">
    <property type="entry name" value="RuvX"/>
    <property type="match status" value="1"/>
</dbReference>
<dbReference type="SMART" id="SM00732">
    <property type="entry name" value="YqgFc"/>
    <property type="match status" value="1"/>
</dbReference>
<dbReference type="SUPFAM" id="SSF53098">
    <property type="entry name" value="Ribonuclease H-like"/>
    <property type="match status" value="1"/>
</dbReference>
<evidence type="ECO:0000255" key="1">
    <source>
        <dbReference type="HAMAP-Rule" id="MF_00651"/>
    </source>
</evidence>
<sequence>MRLLGLDVGSKTIGVAVSDPLGITAQAVMTIPIDEDRHNFGMRSLKKLVREYEANGFVLGLPKNMDGTAGRSVSRSKAMGERLEQKFGLPVYYDDERLTTVASERILVEEAGMHDRRQRKEVVDQMAAVLILQNYLDLQRKE</sequence>
<keyword id="KW-0963">Cytoplasm</keyword>
<keyword id="KW-0378">Hydrolase</keyword>
<keyword id="KW-0540">Nuclease</keyword>
<keyword id="KW-0690">Ribosome biogenesis</keyword>
<name>YQGF_LACDB</name>
<reference key="1">
    <citation type="journal article" date="2006" name="Proc. Natl. Acad. Sci. U.S.A.">
        <title>Comparative genomics of the lactic acid bacteria.</title>
        <authorList>
            <person name="Makarova K.S."/>
            <person name="Slesarev A."/>
            <person name="Wolf Y.I."/>
            <person name="Sorokin A."/>
            <person name="Mirkin B."/>
            <person name="Koonin E.V."/>
            <person name="Pavlov A."/>
            <person name="Pavlova N."/>
            <person name="Karamychev V."/>
            <person name="Polouchine N."/>
            <person name="Shakhova V."/>
            <person name="Grigoriev I."/>
            <person name="Lou Y."/>
            <person name="Rohksar D."/>
            <person name="Lucas S."/>
            <person name="Huang K."/>
            <person name="Goodstein D.M."/>
            <person name="Hawkins T."/>
            <person name="Plengvidhya V."/>
            <person name="Welker D."/>
            <person name="Hughes J."/>
            <person name="Goh Y."/>
            <person name="Benson A."/>
            <person name="Baldwin K."/>
            <person name="Lee J.-H."/>
            <person name="Diaz-Muniz I."/>
            <person name="Dosti B."/>
            <person name="Smeianov V."/>
            <person name="Wechter W."/>
            <person name="Barabote R."/>
            <person name="Lorca G."/>
            <person name="Altermann E."/>
            <person name="Barrangou R."/>
            <person name="Ganesan B."/>
            <person name="Xie Y."/>
            <person name="Rawsthorne H."/>
            <person name="Tamir D."/>
            <person name="Parker C."/>
            <person name="Breidt F."/>
            <person name="Broadbent J.R."/>
            <person name="Hutkins R."/>
            <person name="O'Sullivan D."/>
            <person name="Steele J."/>
            <person name="Unlu G."/>
            <person name="Saier M.H. Jr."/>
            <person name="Klaenhammer T."/>
            <person name="Richardson P."/>
            <person name="Kozyavkin S."/>
            <person name="Weimer B.C."/>
            <person name="Mills D.A."/>
        </authorList>
    </citation>
    <scope>NUCLEOTIDE SEQUENCE [LARGE SCALE GENOMIC DNA]</scope>
    <source>
        <strain>ATCC BAA-365 / Lb-18</strain>
    </source>
</reference>
<gene>
    <name type="ordered locus">LBUL_1484</name>
</gene>
<comment type="function">
    <text evidence="1">Could be a nuclease involved in processing of the 5'-end of pre-16S rRNA.</text>
</comment>
<comment type="subcellular location">
    <subcellularLocation>
        <location evidence="1">Cytoplasm</location>
    </subcellularLocation>
</comment>
<comment type="similarity">
    <text evidence="1">Belongs to the YqgF nuclease family.</text>
</comment>
<proteinExistence type="inferred from homology"/>
<protein>
    <recommendedName>
        <fullName evidence="1">Putative pre-16S rRNA nuclease</fullName>
        <ecNumber evidence="1">3.1.-.-</ecNumber>
    </recommendedName>
</protein>
<feature type="chain" id="PRO_1000061528" description="Putative pre-16S rRNA nuclease">
    <location>
        <begin position="1"/>
        <end position="142"/>
    </location>
</feature>
<accession>Q048Z5</accession>